<sequence>MKLVDEAEILVTAGHGGNGCVGFRREKFIPLGGPDGGDGGSGGSVWIVADENVNTLVDFRHERTFKAQRGENGMGRQAYGKGGEDRIIVVPVGTVVINVQTDEVIGDLTRHGDRLLVAKGGKGGLGNMHFKSSVNRAPRQSTTGEEGEERLLKLELRLLADVGLLGFPNAGKSTLIRAVSSATPKVADYPFTTLYPNLGVVSVEAYRSFVIADVPGLIEGAADGAGLGTQFLRHLQRTRLLLHLVDMAPMDGGVDGVSPADQVRTLERELERHDPQLLKKPRWLVLNKADLMFEDEARAAAETIVAELGWTAPWYLVSALGRDGTFPIMKDVMAFFDRQREDELEARNAG</sequence>
<dbReference type="EC" id="3.6.5.-" evidence="1"/>
<dbReference type="EMBL" id="CP000967">
    <property type="protein sequence ID" value="ACD58165.1"/>
    <property type="molecule type" value="Genomic_DNA"/>
</dbReference>
<dbReference type="SMR" id="B2STC0"/>
<dbReference type="KEGG" id="xop:PXO_00015"/>
<dbReference type="eggNOG" id="COG0536">
    <property type="taxonomic scope" value="Bacteria"/>
</dbReference>
<dbReference type="HOGENOM" id="CLU_011747_2_0_6"/>
<dbReference type="Proteomes" id="UP000001740">
    <property type="component" value="Chromosome"/>
</dbReference>
<dbReference type="GO" id="GO:0005737">
    <property type="term" value="C:cytoplasm"/>
    <property type="evidence" value="ECO:0007669"/>
    <property type="project" value="UniProtKB-SubCell"/>
</dbReference>
<dbReference type="GO" id="GO:0005525">
    <property type="term" value="F:GTP binding"/>
    <property type="evidence" value="ECO:0007669"/>
    <property type="project" value="UniProtKB-UniRule"/>
</dbReference>
<dbReference type="GO" id="GO:0003924">
    <property type="term" value="F:GTPase activity"/>
    <property type="evidence" value="ECO:0007669"/>
    <property type="project" value="UniProtKB-UniRule"/>
</dbReference>
<dbReference type="GO" id="GO:0000287">
    <property type="term" value="F:magnesium ion binding"/>
    <property type="evidence" value="ECO:0007669"/>
    <property type="project" value="InterPro"/>
</dbReference>
<dbReference type="GO" id="GO:0042254">
    <property type="term" value="P:ribosome biogenesis"/>
    <property type="evidence" value="ECO:0007669"/>
    <property type="project" value="UniProtKB-UniRule"/>
</dbReference>
<dbReference type="CDD" id="cd01898">
    <property type="entry name" value="Obg"/>
    <property type="match status" value="1"/>
</dbReference>
<dbReference type="FunFam" id="2.70.210.12:FF:000001">
    <property type="entry name" value="GTPase Obg"/>
    <property type="match status" value="1"/>
</dbReference>
<dbReference type="Gene3D" id="2.70.210.12">
    <property type="entry name" value="GTP1/OBG domain"/>
    <property type="match status" value="1"/>
</dbReference>
<dbReference type="Gene3D" id="3.40.50.300">
    <property type="entry name" value="P-loop containing nucleotide triphosphate hydrolases"/>
    <property type="match status" value="1"/>
</dbReference>
<dbReference type="HAMAP" id="MF_01454">
    <property type="entry name" value="GTPase_Obg"/>
    <property type="match status" value="1"/>
</dbReference>
<dbReference type="InterPro" id="IPR031167">
    <property type="entry name" value="G_OBG"/>
</dbReference>
<dbReference type="InterPro" id="IPR006073">
    <property type="entry name" value="GTP-bd"/>
</dbReference>
<dbReference type="InterPro" id="IPR014100">
    <property type="entry name" value="GTP-bd_Obg/CgtA"/>
</dbReference>
<dbReference type="InterPro" id="IPR006074">
    <property type="entry name" value="GTP1-OBG_CS"/>
</dbReference>
<dbReference type="InterPro" id="IPR006169">
    <property type="entry name" value="GTP1_OBG_dom"/>
</dbReference>
<dbReference type="InterPro" id="IPR036726">
    <property type="entry name" value="GTP1_OBG_dom_sf"/>
</dbReference>
<dbReference type="InterPro" id="IPR045086">
    <property type="entry name" value="OBG_GTPase"/>
</dbReference>
<dbReference type="InterPro" id="IPR027417">
    <property type="entry name" value="P-loop_NTPase"/>
</dbReference>
<dbReference type="NCBIfam" id="TIGR02729">
    <property type="entry name" value="Obg_CgtA"/>
    <property type="match status" value="1"/>
</dbReference>
<dbReference type="NCBIfam" id="NF008955">
    <property type="entry name" value="PRK12297.1"/>
    <property type="match status" value="1"/>
</dbReference>
<dbReference type="NCBIfam" id="NF008956">
    <property type="entry name" value="PRK12299.1"/>
    <property type="match status" value="1"/>
</dbReference>
<dbReference type="PANTHER" id="PTHR11702">
    <property type="entry name" value="DEVELOPMENTALLY REGULATED GTP-BINDING PROTEIN-RELATED"/>
    <property type="match status" value="1"/>
</dbReference>
<dbReference type="PANTHER" id="PTHR11702:SF31">
    <property type="entry name" value="MITOCHONDRIAL RIBOSOME-ASSOCIATED GTPASE 2"/>
    <property type="match status" value="1"/>
</dbReference>
<dbReference type="Pfam" id="PF01018">
    <property type="entry name" value="GTP1_OBG"/>
    <property type="match status" value="1"/>
</dbReference>
<dbReference type="Pfam" id="PF01926">
    <property type="entry name" value="MMR_HSR1"/>
    <property type="match status" value="1"/>
</dbReference>
<dbReference type="PIRSF" id="PIRSF002401">
    <property type="entry name" value="GTP_bd_Obg/CgtA"/>
    <property type="match status" value="1"/>
</dbReference>
<dbReference type="PRINTS" id="PR00326">
    <property type="entry name" value="GTP1OBG"/>
</dbReference>
<dbReference type="SUPFAM" id="SSF82051">
    <property type="entry name" value="Obg GTP-binding protein N-terminal domain"/>
    <property type="match status" value="1"/>
</dbReference>
<dbReference type="SUPFAM" id="SSF52540">
    <property type="entry name" value="P-loop containing nucleoside triphosphate hydrolases"/>
    <property type="match status" value="1"/>
</dbReference>
<dbReference type="PROSITE" id="PS51710">
    <property type="entry name" value="G_OBG"/>
    <property type="match status" value="1"/>
</dbReference>
<dbReference type="PROSITE" id="PS00905">
    <property type="entry name" value="GTP1_OBG"/>
    <property type="match status" value="1"/>
</dbReference>
<dbReference type="PROSITE" id="PS51883">
    <property type="entry name" value="OBG"/>
    <property type="match status" value="1"/>
</dbReference>
<evidence type="ECO:0000255" key="1">
    <source>
        <dbReference type="HAMAP-Rule" id="MF_01454"/>
    </source>
</evidence>
<evidence type="ECO:0000255" key="2">
    <source>
        <dbReference type="PROSITE-ProRule" id="PRU01231"/>
    </source>
</evidence>
<evidence type="ECO:0000256" key="3">
    <source>
        <dbReference type="SAM" id="MobiDB-lite"/>
    </source>
</evidence>
<organism>
    <name type="scientific">Xanthomonas oryzae pv. oryzae (strain PXO99A)</name>
    <dbReference type="NCBI Taxonomy" id="360094"/>
    <lineage>
        <taxon>Bacteria</taxon>
        <taxon>Pseudomonadati</taxon>
        <taxon>Pseudomonadota</taxon>
        <taxon>Gammaproteobacteria</taxon>
        <taxon>Lysobacterales</taxon>
        <taxon>Lysobacteraceae</taxon>
        <taxon>Xanthomonas</taxon>
    </lineage>
</organism>
<name>OBG_XANOP</name>
<accession>B2STC0</accession>
<gene>
    <name evidence="1" type="primary">obg</name>
    <name type="ordered locus">PXO_00015</name>
</gene>
<protein>
    <recommendedName>
        <fullName evidence="1">GTPase Obg</fullName>
        <ecNumber evidence="1">3.6.5.-</ecNumber>
    </recommendedName>
    <alternativeName>
        <fullName evidence="1">GTP-binding protein Obg</fullName>
    </alternativeName>
</protein>
<keyword id="KW-0963">Cytoplasm</keyword>
<keyword id="KW-0342">GTP-binding</keyword>
<keyword id="KW-0378">Hydrolase</keyword>
<keyword id="KW-0460">Magnesium</keyword>
<keyword id="KW-0479">Metal-binding</keyword>
<keyword id="KW-0547">Nucleotide-binding</keyword>
<proteinExistence type="inferred from homology"/>
<feature type="chain" id="PRO_0000386400" description="GTPase Obg">
    <location>
        <begin position="1"/>
        <end position="350"/>
    </location>
</feature>
<feature type="domain" description="Obg" evidence="2">
    <location>
        <begin position="1"/>
        <end position="159"/>
    </location>
</feature>
<feature type="domain" description="OBG-type G" evidence="1">
    <location>
        <begin position="160"/>
        <end position="337"/>
    </location>
</feature>
<feature type="region of interest" description="Disordered" evidence="3">
    <location>
        <begin position="127"/>
        <end position="146"/>
    </location>
</feature>
<feature type="compositionally biased region" description="Polar residues" evidence="3">
    <location>
        <begin position="130"/>
        <end position="143"/>
    </location>
</feature>
<feature type="binding site" evidence="1">
    <location>
        <begin position="166"/>
        <end position="173"/>
    </location>
    <ligand>
        <name>GTP</name>
        <dbReference type="ChEBI" id="CHEBI:37565"/>
    </ligand>
</feature>
<feature type="binding site" evidence="1">
    <location>
        <position position="173"/>
    </location>
    <ligand>
        <name>Mg(2+)</name>
        <dbReference type="ChEBI" id="CHEBI:18420"/>
    </ligand>
</feature>
<feature type="binding site" evidence="1">
    <location>
        <begin position="191"/>
        <end position="195"/>
    </location>
    <ligand>
        <name>GTP</name>
        <dbReference type="ChEBI" id="CHEBI:37565"/>
    </ligand>
</feature>
<feature type="binding site" evidence="1">
    <location>
        <position position="193"/>
    </location>
    <ligand>
        <name>Mg(2+)</name>
        <dbReference type="ChEBI" id="CHEBI:18420"/>
    </ligand>
</feature>
<feature type="binding site" evidence="1">
    <location>
        <begin position="213"/>
        <end position="216"/>
    </location>
    <ligand>
        <name>GTP</name>
        <dbReference type="ChEBI" id="CHEBI:37565"/>
    </ligand>
</feature>
<feature type="binding site" evidence="1">
    <location>
        <begin position="287"/>
        <end position="290"/>
    </location>
    <ligand>
        <name>GTP</name>
        <dbReference type="ChEBI" id="CHEBI:37565"/>
    </ligand>
</feature>
<feature type="binding site" evidence="1">
    <location>
        <begin position="318"/>
        <end position="320"/>
    </location>
    <ligand>
        <name>GTP</name>
        <dbReference type="ChEBI" id="CHEBI:37565"/>
    </ligand>
</feature>
<comment type="function">
    <text evidence="1">An essential GTPase which binds GTP, GDP and possibly (p)ppGpp with moderate affinity, with high nucleotide exchange rates and a fairly low GTP hydrolysis rate. Plays a role in control of the cell cycle, stress response, ribosome biogenesis and in those bacteria that undergo differentiation, in morphogenesis control.</text>
</comment>
<comment type="cofactor">
    <cofactor evidence="1">
        <name>Mg(2+)</name>
        <dbReference type="ChEBI" id="CHEBI:18420"/>
    </cofactor>
</comment>
<comment type="subunit">
    <text evidence="1">Monomer.</text>
</comment>
<comment type="subcellular location">
    <subcellularLocation>
        <location evidence="1">Cytoplasm</location>
    </subcellularLocation>
</comment>
<comment type="similarity">
    <text evidence="1">Belongs to the TRAFAC class OBG-HflX-like GTPase superfamily. OBG GTPase family.</text>
</comment>
<reference key="1">
    <citation type="journal article" date="2008" name="BMC Genomics">
        <title>Genome sequence and rapid evolution of the rice pathogen Xanthomonas oryzae pv. oryzae PXO99A.</title>
        <authorList>
            <person name="Salzberg S.L."/>
            <person name="Sommer D.D."/>
            <person name="Schatz M.C."/>
            <person name="Phillippy A.M."/>
            <person name="Rabinowicz P.D."/>
            <person name="Tsuge S."/>
            <person name="Furutani A."/>
            <person name="Ochiai H."/>
            <person name="Delcher A.L."/>
            <person name="Kelley D."/>
            <person name="Madupu R."/>
            <person name="Puiu D."/>
            <person name="Radune D."/>
            <person name="Shumway M."/>
            <person name="Trapnell C."/>
            <person name="Aparna G."/>
            <person name="Jha G."/>
            <person name="Pandey A."/>
            <person name="Patil P.B."/>
            <person name="Ishihara H."/>
            <person name="Meyer D.F."/>
            <person name="Szurek B."/>
            <person name="Verdier V."/>
            <person name="Koebnik R."/>
            <person name="Dow J.M."/>
            <person name="Ryan R.P."/>
            <person name="Hirata H."/>
            <person name="Tsuyumu S."/>
            <person name="Won Lee S."/>
            <person name="Seo Y.-S."/>
            <person name="Sriariyanum M."/>
            <person name="Ronald P.C."/>
            <person name="Sonti R.V."/>
            <person name="Van Sluys M.-A."/>
            <person name="Leach J.E."/>
            <person name="White F.F."/>
            <person name="Bogdanove A.J."/>
        </authorList>
    </citation>
    <scope>NUCLEOTIDE SEQUENCE [LARGE SCALE GENOMIC DNA]</scope>
    <source>
        <strain>PXO99A</strain>
    </source>
</reference>